<gene>
    <name evidence="11" type="primary">fmqA</name>
    <name evidence="9" type="synonym">NRPS12</name>
    <name evidence="10" type="synonym">pesM</name>
    <name type="ORF">AFUA_6G12080</name>
</gene>
<protein>
    <recommendedName>
        <fullName evidence="9">Nonribosomal peptide synthetase fmqA</fullName>
        <ecNumber evidence="4">6.3.2.-</ecNumber>
    </recommendedName>
    <alternativeName>
        <fullName evidence="11">Fumiquinazoline biosynthesis cluster protein A</fullName>
    </alternativeName>
</protein>
<name>FMQA_ASPFU</name>
<comment type="function">
    <text evidence="4 5 6 7 8">Nonribosomal peptide synthetase; part of the gene cluster that mediates the biosynthesis of the antitumor fumiquinazolines that confer a dual-usage capability to defend against phagocytes in the environment and animal hosts (PubMed:20225828, PubMed:20804163, PubMed:21899262, PubMed:24612080, PubMed:33705521). The simplest member is fumiquinazoline F (FQF) with a 6-6-6 tricyclic core derived from anthranilic acid (Ant), tryptophan (Trp), and alanine (Ala) (PubMed:20225828). The trimodular NRPS fmqA is responsible for FQF formation (PubMed:20225828). Modules 1, 2 and 3 of fmqA are predicted to activate and load Ant, Trp and Ala, respectively, providing for the assembly of an Ant-Trp-Ala-S-enzyme intermediate that would undergo double cyclization for chain release and generation of the tricyclic 6-6-6 product fumiquinazoline F (PubMed:20225828). The presence of an E domain predicted for module 2 of fmqA is consistent with epimerization of L-Trp to D-Trp during assembly to generate the R-stereocenter at C14 of FQF (PubMed:20225828). The FAD-dependent monooxygenase fmqB and the monomodular NRPS fmqC then maturate FQF to FQA (PubMed:20804163). FmqB oxidizes the 2',3'-double bond of the indole side chain of FQF, and fmqC activates L-Ala as the adenylate, installs it as the pantetheinyl thioester on its carrier protein domain, and acylates the oxidized indole for subsequent intramolecular cyclization to create the 6-5-5-imidazolindolone of FQA (PubMed:20804163). The FAD-linked oxidoreductase fmqD introduces a third layer of scaffold complexity by converting FQA to the spirohemiaminal FQC, presumably by catalyzing the formation of a transient imine within the pyrazinone ring (PubMed:21899262). FQC subsequently converts nonenzymatically to the known cyclic aminal FQD (PubMed:21899262).</text>
</comment>
<comment type="biophysicochemical properties">
    <kinetics>
        <KM evidence="4">18 uM for anthranilate</KM>
        <KM evidence="4">230 uM for ATP</KM>
        <KM evidence="4">17 uM for salicylic acid</KM>
        <KM evidence="4">29 uM for 2-chlorobenzoic acid</KM>
        <KM evidence="4">32 uM for 4-chlorobenzoic acid</KM>
        <KM evidence="4">74 uM for benzoic acid</KM>
        <KM evidence="4">416 uM for 3-aminobenzoic acidATP</KM>
        <KM evidence="4">1900 uM for 4-aminobenzoic acid</KM>
    </kinetics>
</comment>
<comment type="pathway">
    <text evidence="4 7">Alkaloid biosynthesis.</text>
</comment>
<comment type="subunit">
    <text evidence="8">Interacts with the mitogen-activated protein kinase mpkA.</text>
</comment>
<comment type="subcellular location">
    <subcellularLocation>
        <location evidence="7">Cytoplasmic vesicle</location>
    </subcellularLocation>
    <text evidence="7">Does not localize to endocytic vesicles, vacuoles nor mitochondria (PubMed:24612080).</text>
</comment>
<comment type="induction">
    <text evidence="7 8">Expression is positively regulated by brlA, a conidiation-specific transcription factor involved in the early stage of asexual development and necessary for conidiophore formation (PubMed:24612080). Expression is also induced by the cell wall integrity (CWI) signaling pathway that includes the mitogen-activated protein kinase mpkA and the transcription factor rlmA (PubMed:33705521). Expression is negatively regulated by the transcription factor sebA (PubMed:33705521).</text>
</comment>
<comment type="domain">
    <text evidence="3">NRP synthetases are composed of discrete domains (adenylation (A), thiolation (T) or peptidyl carrier protein (PCP) and condensation (C) domains) which when grouped together are referred to as a single module (PubMed:17464044). Each module is responsible for the recognition (via the A domain) and incorporation of a single amino acid into the growing peptide product (PubMed:17464044). Thus, an NRP synthetase is generally composed of one or more modules and can terminate in a thioesterase domain (TE) that releases the newly synthesized peptide from the enzyme (PubMed:17464044). Occasionally, epimerase (E) domains (responsible for L- to D- amino acid conversion) are present within the NRP synthetase (PubMed:17464044). NRPS12 has the following architecture: A-T-C-A-T-E-C-A-T-C (PubMed:17464044, PubMed:20225828).</text>
</comment>
<comment type="disruption phenotype">
    <text evidence="7">Abolishes the production of all fumiquinazolines (PubMed:24612080).</text>
</comment>
<comment type="similarity">
    <text evidence="12">Belongs to the NRP synthetase family.</text>
</comment>
<feature type="chain" id="PRO_0000416553" description="Nonribosomal peptide synthetase fmqA">
    <location>
        <begin position="1"/>
        <end position="3955"/>
    </location>
</feature>
<feature type="domain" description="Carrier 1" evidence="2 13 14">
    <location>
        <begin position="806"/>
        <end position="879"/>
    </location>
</feature>
<feature type="domain" description="Carrier 2" evidence="2 13 14">
    <location>
        <begin position="1880"/>
        <end position="1956"/>
    </location>
</feature>
<feature type="domain" description="Carrier 3" evidence="2 13 14">
    <location>
        <begin position="3422"/>
        <end position="3498"/>
    </location>
</feature>
<feature type="region of interest" description="Adenylation 1" evidence="1 13 14">
    <location>
        <begin position="293"/>
        <end position="691"/>
    </location>
</feature>
<feature type="region of interest" description="Condensation 1" evidence="1 13 14">
    <location>
        <begin position="916"/>
        <end position="1187"/>
    </location>
</feature>
<feature type="region of interest" description="Adenylation 2" evidence="1 13 14">
    <location>
        <begin position="1371"/>
        <end position="1766"/>
    </location>
</feature>
<feature type="region of interest" description="Epimerase" evidence="1 13 14">
    <location>
        <begin position="1970"/>
        <end position="2261"/>
    </location>
</feature>
<feature type="region of interest" description="Condensation 2" evidence="1 13 14">
    <location>
        <begin position="2438"/>
        <end position="2724"/>
    </location>
</feature>
<feature type="region of interest" description="Adenylation 3" evidence="1 13 14">
    <location>
        <begin position="2906"/>
        <end position="3299"/>
    </location>
</feature>
<feature type="region of interest" description="Condensation 3" evidence="1 13 14">
    <location>
        <begin position="3541"/>
        <end position="3805"/>
    </location>
</feature>
<feature type="modified residue" description="O-(pantetheine 4'-phosphoryl)serine" evidence="2">
    <location>
        <position position="840"/>
    </location>
</feature>
<feature type="modified residue" description="O-(pantetheine 4'-phosphoryl)serine" evidence="2">
    <location>
        <position position="1917"/>
    </location>
</feature>
<feature type="modified residue" description="O-(pantetheine 4'-phosphoryl)serine" evidence="2">
    <location>
        <position position="3459"/>
    </location>
</feature>
<organism>
    <name type="scientific">Aspergillus fumigatus (strain ATCC MYA-4609 / CBS 101355 / FGSC A1100 / Af293)</name>
    <name type="common">Neosartorya fumigata</name>
    <dbReference type="NCBI Taxonomy" id="330879"/>
    <lineage>
        <taxon>Eukaryota</taxon>
        <taxon>Fungi</taxon>
        <taxon>Dikarya</taxon>
        <taxon>Ascomycota</taxon>
        <taxon>Pezizomycotina</taxon>
        <taxon>Eurotiomycetes</taxon>
        <taxon>Eurotiomycetidae</taxon>
        <taxon>Eurotiales</taxon>
        <taxon>Aspergillaceae</taxon>
        <taxon>Aspergillus</taxon>
        <taxon>Aspergillus subgen. Fumigati</taxon>
    </lineage>
</organism>
<accession>Q4WLW5</accession>
<evidence type="ECO:0000255" key="1"/>
<evidence type="ECO:0000255" key="2">
    <source>
        <dbReference type="PROSITE-ProRule" id="PRU00258"/>
    </source>
</evidence>
<evidence type="ECO:0000269" key="3">
    <source>
    </source>
</evidence>
<evidence type="ECO:0000269" key="4">
    <source>
    </source>
</evidence>
<evidence type="ECO:0000269" key="5">
    <source>
    </source>
</evidence>
<evidence type="ECO:0000269" key="6">
    <source>
    </source>
</evidence>
<evidence type="ECO:0000269" key="7">
    <source>
    </source>
</evidence>
<evidence type="ECO:0000269" key="8">
    <source>
    </source>
</evidence>
<evidence type="ECO:0000303" key="9">
    <source>
    </source>
</evidence>
<evidence type="ECO:0000303" key="10">
    <source>
    </source>
</evidence>
<evidence type="ECO:0000303" key="11">
    <source>
    </source>
</evidence>
<evidence type="ECO:0000305" key="12"/>
<evidence type="ECO:0000305" key="13">
    <source>
    </source>
</evidence>
<evidence type="ECO:0000305" key="14">
    <source>
    </source>
</evidence>
<sequence>MERLEAKNQTTKHGERMAPQRYSVLRDEKCLFPVRNDGKLLVDEWRVTELAISSGEKGLKLCRTTCPTAGADPRYLAAAAWALLLWRFAEVDTVQIGLQDIPPGANEDILEAGLKRGMKVLAASRRQVQLLNELWQGDTWSISDADPTCYSYFDTGIVICRGNSQDCLAKCRSPNQLRKANGEACNVLLVLELDLDSNWRKCFLAYKTTVLTDIQATHLKSSFEEVVELARAGRGIPLSEICLVSRRQLDQIGKWNERALVQPKFKAMHQVVHDRATDRRHHPAVIAADRALSYSELETLSLKVAYRLRGSGVQPGDLIPVCFCKSSWAIVAMLAINKLGAAFVPLDPSQPVNRLKSITRQLDATLAVTSPENQSLVEDLVTTTVVVSETTVSELVDVHNEIVLPACDPGAPAYCLFTSGSTGKPKGCVVDHAALASVATHSHALHLGPTSRVLQFASFTFGVSLIEVWCTLAAGGTVCLPSDSDRVSRLADAIRSMGVDWCILTPTVLATLEPEAVPNLRTILVAGEPLKKAQFSLWAERARLFQAYGFTEWAGICCVSPQIRSIGDVGIIGTPANARCWLVEPGNPNQLAPIGAVAELAVEGPSLAQGYLHDPEKTAATLIPPPRWRAQYGHADGKRIYTTGDLVYYDSNGMLRYVSRKDRQVKIRGQRIDLAEPEYHIAQACCTIRNVVLDAIVPADSNGDAILVAFVLPSRDESSSNGGHDSPLFAVPDDHFTSSVRQLTSFLEDKLPDYMVPRLFLQLKETPVTITGKIARQKLREAAEALRHDELVALAGLETRVLPPNTHKETLIHQLVVELLHLPPEMVGMNHNFFSLGGDSVSVMKLVSRAKRVGLSFTVKDVFRSPQLGDLARLTDVVNSGAAQHMPPFSLLDRGAQPGLLSMAAKICQVESSMIQDIYPCTPLQEGMMTLSAAKAGSYIARFVYRLEEHVDSPRFRRAWEMTVEATPILRTRIISASDGRLYQVVIQEKFRWDDDGQPSGECVQNGQDRHMLLGEPLTHAALVRDRNQDGSLSTVFVLTMHHSVCDRWSVGLIMDSVETAYTGQTLTTNSMGPFLQYIQQLQGGDAFWRSQFVGVKAEVFPSLPSPEYTPTPTETIDLSVELRDAVPGGHTIANAIRLAWALVISHYTSCSDVVFGVTISGRAVPVPDIERIIGPIIATVPLRVRLKESSTVLEALKAIQDQSMEMIPFEQLGLRQIRKLSPEAEEACNFQSQLVVQPAWGDENRSLFATCEAGAAAEGGFAAYALSMICQLVGSSQIDVRTEFDPKVIQAPIMQRIVHHFVYTLQYLLAHPDARVAEIPVVSPGEKQLLRQWNGIVPPASHQCVHEIIQQRQIERPTSTAVWAWDGQLTYAELGELSDRLAEYLATKGVQPEVIVPVCLEKSYWTTVAMLGISKAGGAFALLDPSQPEQRLQSICHQLNSAVILTSEKNRDLAGKLASHPIVLSLQSSRRWGHGPAKQAPATARPDHTLYVAFTSGSTGTPKGVVIEHRSFCTSALALNRITGVNSESRMLQFAGYSFDGSIMEMLSALMAGACVCVPSEFQRRNELVAAAAKFELTHAHLTPSVARHLLRGNPEFTKTLVSVGEPMTASDVADWASNGQCKVMNGYGPAECAVSTTIQAAVTSASDPKNIGFPVAGVCWVVHPENHDILLPPGAVGELLIEGPTLARGYLNEPDKTAAAFIPLPAWIKDIRPEQPHGRLYKSGDLVRYNADGSFQYIGRRDSQIKLRGQRIELDEVEKHVYQCWPGVIAVVAVEMVSFTPATQTLVAFVVVEEHVDTTGDILAAPTQEFTGQVAVAQARLREAIPAFMVPEIFIPLLVLPQSASGKTDRRRLRSIATACTREKLAAYGAVGTGTKREPTSVAEREMQAIWAQALNLPLAEIGMDDSFYQLGGDSITAMQVVAHARSKGLAVTMDSILRLKSISKIMSHESSLSPAIVHIDEEEDVWFALSPIQQMFFDRQPSGWDRFSQVFLLRVSQPVTASQLQMALHTLVSKHPMLRARFAKQHDGSWRQVITSKIQESYRCRSHRLNRRSSVDGVVSSGACSLSIQKGPLIAVDLMSREDGAQYLSIVIHHLVVDLVSWRIILADLEAMLRGENPMANHSTPFQTWCRLQAEYARQYLSPQHAFPTDLPDHYHQDPSVFWGLAGQPNLVRDSRRQVFTLDEHTTRQLLGAANAAFATRTDEVLHAVLLYSFLKVFPHRIAPLTFSEGHGREPWDSAIDLSQTVGWFTTMWPVVAELQQNHSFLEVVCRVKDARRAVPCNGWAYFVSRYLNPSGRQAFQQFHPVELVFNYAGEYQQFNQAGAFFIPDMPEYQGSLDAGEQIQRFGIFEVFASVVRGCLQFQFMYNRYMKHQLEIQKWIESCRQTLIEGCSTLIAAKPSRTLSDFPLLPLTYSTLRELLDVTLPTAGVSVENVEDIYPCSPSQRGMLIAQAKAAHNYNASVTWSIRSRIDSRPNVARLKAAWCEVVKRHAILRTVFVESPWPESYMDQVVLQNVSPEFVFCRGSDSLPQSISSPGQTRWSKGQCQHIMRVWERDNGDILCRLDLSHAIMDRTTLAIIQKDLSLAYDERLLPGRAPLYRDYISYIYQQDSESARQYWQGYLEGVEPCEFPTLNPVDPSITKEWGNLYRTLEDRRRLEEFCRTHSVTPWNVAGLAWAMVLRSFTRTDSVCFGYVKSGRDLPIDGIAGTAGPVFNPLPCRVHLTERLTVRETIGRLQEEYLQSLAHQSFPLSDIHRLAGVTSGVLFNTSVAVQTEVASEAEEAKRSLEFTTVAMEDGTEDDMVITLVPRGGELVLHLRHRSRTLTTDQASTVLATFEKALCSILANAEAPMTSIDVFSDHDKAILWSRNRRVPDAVESCVHELIQKHCVERPHSPAVNAWDGAFTYGQLDELSSRLAVYLAAQGVGPNVVVPLCFEKTRWTPIAMMGVMKAGGAFLLLDPSYPLQRLKDICADIDCRLVVSSTTHEAMSRELASTVVVVGEDRHHWQLENTSHTITMPKVRPADALYVVFTSGSTGKPKGVVIEHRSYCSGALDHIRSYNLTPQSRVLQFSSYAFDISIVEQLSVLIAGGCICVISESQRKNSLGEAATALQANHAMLIPSVARLVRHEDLSTITSLSLAGECMQETDVSYWAQHVRLMNGYGPAECSALSLVQPCVLPHSDPHDIGYPVGSVAWVVDPHDHHKLVPNGAVGELLIEGPIVGRGYINNAEKTAEVFIEPPTWLRTLRGHCTSRLYKTGDLVRANPSGSLSILGRKDRQVKLRGQRLELGEVEANVQHCFPGALDVVADLLPSSRGGKPQLVAMVFQNAERAARIAPESDSKLIAEPSVDFMQSATTAETRLRQTVPNFMVPSMFLPLAQIPRTHSDKVDRNSLLKAVAAMSSIELQAYKASVDAGHCSTRAPSTEEEKKLAEIWADVLKVPVEHIGADDNFLLSGGDSIDAMKAAAFCRAAGMALSVADIFAHPVLSDLAKVAVPKSLNGSSTSHQPFSLSPVDSPKDLHMSLMEQGLVPPGSALADLLPGTQAQQFFIERGTFHSYNFSIRGPLDRCRLQKTCTAILSRHSILRTKFLQYEGRLIQIVLDNLETPFTHYTTDGDLLEFCKSLWERDLAALDGLGRLPCKFTLVSRSEQEHVFTIQISHAQWDGVSIPRLFSDIAAIYNQIPLPSTTHFADYVYHRSSRDERPAFDFWKKYLRGSSMPVPFPATNCQDREHKTQWTFQGIKNPRLPAGITMASLVKAACGFHLCQLLSQNDVVFGHTVNGRNLALDNVEALLGCCLNFIPLRVMLQPSWTVLDLLAHVQEQYTRALPHEHLELRDIFRHSTPWPADTQLSFIVQHQNIELHHNIALDGLQVQYSKFAQFDPLTEVWIFSEPHPDRLEIQVCANTRVLSEDQARALCRRLCDLIEFFSASPDCPLSKVVDHMDRPGLLAEEKVLN</sequence>
<proteinExistence type="evidence at protein level"/>
<keyword id="KW-0968">Cytoplasmic vesicle</keyword>
<keyword id="KW-0436">Ligase</keyword>
<keyword id="KW-0596">Phosphopantetheine</keyword>
<keyword id="KW-0597">Phosphoprotein</keyword>
<keyword id="KW-1185">Reference proteome</keyword>
<keyword id="KW-0677">Repeat</keyword>
<keyword id="KW-0843">Virulence</keyword>
<reference key="1">
    <citation type="journal article" date="2005" name="Nature">
        <title>Genomic sequence of the pathogenic and allergenic filamentous fungus Aspergillus fumigatus.</title>
        <authorList>
            <person name="Nierman W.C."/>
            <person name="Pain A."/>
            <person name="Anderson M.J."/>
            <person name="Wortman J.R."/>
            <person name="Kim H.S."/>
            <person name="Arroyo J."/>
            <person name="Berriman M."/>
            <person name="Abe K."/>
            <person name="Archer D.B."/>
            <person name="Bermejo C."/>
            <person name="Bennett J.W."/>
            <person name="Bowyer P."/>
            <person name="Chen D."/>
            <person name="Collins M."/>
            <person name="Coulsen R."/>
            <person name="Davies R."/>
            <person name="Dyer P.S."/>
            <person name="Farman M.L."/>
            <person name="Fedorova N."/>
            <person name="Fedorova N.D."/>
            <person name="Feldblyum T.V."/>
            <person name="Fischer R."/>
            <person name="Fosker N."/>
            <person name="Fraser A."/>
            <person name="Garcia J.L."/>
            <person name="Garcia M.J."/>
            <person name="Goble A."/>
            <person name="Goldman G.H."/>
            <person name="Gomi K."/>
            <person name="Griffith-Jones S."/>
            <person name="Gwilliam R."/>
            <person name="Haas B.J."/>
            <person name="Haas H."/>
            <person name="Harris D.E."/>
            <person name="Horiuchi H."/>
            <person name="Huang J."/>
            <person name="Humphray S."/>
            <person name="Jimenez J."/>
            <person name="Keller N."/>
            <person name="Khouri H."/>
            <person name="Kitamoto K."/>
            <person name="Kobayashi T."/>
            <person name="Konzack S."/>
            <person name="Kulkarni R."/>
            <person name="Kumagai T."/>
            <person name="Lafton A."/>
            <person name="Latge J.-P."/>
            <person name="Li W."/>
            <person name="Lord A."/>
            <person name="Lu C."/>
            <person name="Majoros W.H."/>
            <person name="May G.S."/>
            <person name="Miller B.L."/>
            <person name="Mohamoud Y."/>
            <person name="Molina M."/>
            <person name="Monod M."/>
            <person name="Mouyna I."/>
            <person name="Mulligan S."/>
            <person name="Murphy L.D."/>
            <person name="O'Neil S."/>
            <person name="Paulsen I."/>
            <person name="Penalva M.A."/>
            <person name="Pertea M."/>
            <person name="Price C."/>
            <person name="Pritchard B.L."/>
            <person name="Quail M.A."/>
            <person name="Rabbinowitsch E."/>
            <person name="Rawlins N."/>
            <person name="Rajandream M.A."/>
            <person name="Reichard U."/>
            <person name="Renauld H."/>
            <person name="Robson G.D."/>
            <person name="Rodriguez de Cordoba S."/>
            <person name="Rodriguez-Pena J.M."/>
            <person name="Ronning C.M."/>
            <person name="Rutter S."/>
            <person name="Salzberg S.L."/>
            <person name="Sanchez M."/>
            <person name="Sanchez-Ferrero J.C."/>
            <person name="Saunders D."/>
            <person name="Seeger K."/>
            <person name="Squares R."/>
            <person name="Squares S."/>
            <person name="Takeuchi M."/>
            <person name="Tekaia F."/>
            <person name="Turner G."/>
            <person name="Vazquez de Aldana C.R."/>
            <person name="Weidman J."/>
            <person name="White O."/>
            <person name="Woodward J.R."/>
            <person name="Yu J.-H."/>
            <person name="Fraser C.M."/>
            <person name="Galagan J.E."/>
            <person name="Asai K."/>
            <person name="Machida M."/>
            <person name="Hall N."/>
            <person name="Barrell B.G."/>
            <person name="Denning D.W."/>
        </authorList>
    </citation>
    <scope>NUCLEOTIDE SEQUENCE [LARGE SCALE GENOMIC DNA]</scope>
    <source>
        <strain>ATCC MYA-4609 / CBS 101355 / FGSC A1100 / Af293</strain>
    </source>
</reference>
<reference key="2">
    <citation type="journal article" date="2006" name="Gene">
        <title>Phylogenomic analysis of non-ribosomal peptide synthetases in the genus Aspergillus.</title>
        <authorList>
            <person name="Cramer R.A. Jr."/>
            <person name="Stajich J.E."/>
            <person name="Yamanaka Y."/>
            <person name="Dietrich F.S."/>
            <person name="Steinbach W.J."/>
            <person name="Perfect J.R."/>
        </authorList>
    </citation>
    <scope>NOMENCLATURE</scope>
</reference>
<reference key="3">
    <citation type="journal article" date="2007" name="Microbiology">
        <title>Nonribosomal peptide synthesis in Aspergillus fumigatus and other fungi.</title>
        <authorList>
            <person name="Stack D."/>
            <person name="Neville C."/>
            <person name="Doyle S."/>
        </authorList>
    </citation>
    <scope>REVIEW ON FUNCTION</scope>
    <scope>DOMAIN</scope>
</reference>
<reference key="4">
    <citation type="journal article" date="2010" name="Biochemistry">
        <title>Anthranilate-activating modules from fungal nonribosomal peptide assembly lines.</title>
        <authorList>
            <person name="Ames B.D."/>
            <person name="Walsh C.T."/>
        </authorList>
    </citation>
    <scope>FUNCTION</scope>
    <scope>BIOPHYSICOCHEMICAL PROPERTIES</scope>
    <scope>PHOSPHOPANTETHEINYLATION</scope>
    <scope>DOMAIN</scope>
    <scope>PATHWAY</scope>
</reference>
<reference key="5">
    <citation type="journal article" date="2010" name="Biochemistry">
        <title>Enzymatic processing of fumiquinazoline F: a tandem oxidative-acylation strategy for the generation of multicyclic scaffolds in fungal indole alkaloid biosynthesis.</title>
        <authorList>
            <person name="Ames B.D."/>
            <person name="Liu X."/>
            <person name="Walsh C.T."/>
        </authorList>
    </citation>
    <scope>FUNCTION</scope>
</reference>
<reference key="6">
    <citation type="journal article" date="2011" name="Biochemistry">
        <title>Complexity generation in fungal peptidyl alkaloid biosynthesis: oxidation of fumiquinazoline A to the heptacyclic hemiaminal fumiquinazoline C by the flavoenzyme Af12070 from Aspergillus fumigatus.</title>
        <authorList>
            <person name="Ames B.D."/>
            <person name="Haynes S.W."/>
            <person name="Gao X."/>
            <person name="Evans B.S."/>
            <person name="Kelleher N.L."/>
            <person name="Tang Y."/>
            <person name="Walsh C.T."/>
        </authorList>
    </citation>
    <scope>FUNCTION</scope>
</reference>
<reference key="7">
    <citation type="journal article" date="2014" name="Cell. Microbiol.">
        <title>Co-ordination between BrlA regulation and secretion of the oxidoreductase FmqD directs selective accumulation of fumiquinazoline C to conidial tissues in Aspergillus fumigatus.</title>
        <authorList>
            <person name="Lim F.Y."/>
            <person name="Ames B."/>
            <person name="Walsh C.T."/>
            <person name="Keller N.P."/>
        </authorList>
    </citation>
    <scope>FUNCTION</scope>
    <scope>DISRUPTION PHENOTYPE</scope>
    <scope>INDUCTION</scope>
    <scope>SUBCELLULAR LOCATION</scope>
    <scope>PATHWAY</scope>
</reference>
<reference key="8">
    <citation type="journal article" date="2021" name="Genetics">
        <title>Transcriptional control of the production of Aspergillus fumigatus conidia-borne secondary metabolite fumiquinazoline C important for phagocytosis protection.</title>
        <authorList>
            <person name="Rocha M.C."/>
            <person name="Fabri J.H.T.M."/>
            <person name="da Silva L.P."/>
            <person name="Angolini C.F.F."/>
            <person name="Bertolini M.C."/>
            <person name="da Cunha A.F."/>
            <person name="Valiante V."/>
            <person name="Goldman G.H."/>
            <person name="Fill T.P."/>
            <person name="Malavazi I."/>
        </authorList>
    </citation>
    <scope>FUNCTION</scope>
    <scope>INDUCTION</scope>
    <scope>INTERACTION WITH MPKA</scope>
</reference>
<dbReference type="EC" id="6.3.2.-" evidence="4"/>
<dbReference type="EMBL" id="AAHF01000006">
    <property type="protein sequence ID" value="EAL89049.1"/>
    <property type="molecule type" value="Genomic_DNA"/>
</dbReference>
<dbReference type="RefSeq" id="XP_751087.1">
    <property type="nucleotide sequence ID" value="XM_745994.1"/>
</dbReference>
<dbReference type="SMR" id="Q4WLW5"/>
<dbReference type="STRING" id="330879.Q4WLW5"/>
<dbReference type="EnsemblFungi" id="EAL89049">
    <property type="protein sequence ID" value="EAL89049"/>
    <property type="gene ID" value="AFUA_6G12080"/>
</dbReference>
<dbReference type="GeneID" id="3508392"/>
<dbReference type="KEGG" id="afm:AFUA_6G12080"/>
<dbReference type="VEuPathDB" id="FungiDB:Afu6g12080"/>
<dbReference type="eggNOG" id="KOG1176">
    <property type="taxonomic scope" value="Eukaryota"/>
</dbReference>
<dbReference type="eggNOG" id="KOG1178">
    <property type="taxonomic scope" value="Eukaryota"/>
</dbReference>
<dbReference type="HOGENOM" id="CLU_000022_60_4_1"/>
<dbReference type="InParanoid" id="Q4WLW5"/>
<dbReference type="OMA" id="PAAFHCG"/>
<dbReference type="OrthoDB" id="416786at2759"/>
<dbReference type="BioCyc" id="MetaCyc:MONOMER-18827"/>
<dbReference type="SABIO-RK" id="Q4WLW5"/>
<dbReference type="PHI-base" id="PHI:10461"/>
<dbReference type="Proteomes" id="UP000002530">
    <property type="component" value="Chromosome 6"/>
</dbReference>
<dbReference type="GO" id="GO:0031410">
    <property type="term" value="C:cytoplasmic vesicle"/>
    <property type="evidence" value="ECO:0000314"/>
    <property type="project" value="AspGD"/>
</dbReference>
<dbReference type="GO" id="GO:0016874">
    <property type="term" value="F:ligase activity"/>
    <property type="evidence" value="ECO:0007669"/>
    <property type="project" value="UniProtKB-KW"/>
</dbReference>
<dbReference type="GO" id="GO:0031177">
    <property type="term" value="F:phosphopantetheine binding"/>
    <property type="evidence" value="ECO:0007669"/>
    <property type="project" value="InterPro"/>
</dbReference>
<dbReference type="GO" id="GO:1900781">
    <property type="term" value="P:fumiquinazoline C biosynthetic process"/>
    <property type="evidence" value="ECO:0000314"/>
    <property type="project" value="GO_Central"/>
</dbReference>
<dbReference type="GO" id="GO:0019184">
    <property type="term" value="P:nonribosomal peptide biosynthetic process"/>
    <property type="evidence" value="ECO:0000255"/>
    <property type="project" value="AspGD"/>
</dbReference>
<dbReference type="GO" id="GO:0019748">
    <property type="term" value="P:secondary metabolic process"/>
    <property type="evidence" value="ECO:0000317"/>
    <property type="project" value="AspGD"/>
</dbReference>
<dbReference type="CDD" id="cd05918">
    <property type="entry name" value="A_NRPS_SidN3_like"/>
    <property type="match status" value="3"/>
</dbReference>
<dbReference type="CDD" id="cd19542">
    <property type="entry name" value="CT_NRPS-like"/>
    <property type="match status" value="2"/>
</dbReference>
<dbReference type="CDD" id="cd19534">
    <property type="entry name" value="E_NRPS"/>
    <property type="match status" value="1"/>
</dbReference>
<dbReference type="CDD" id="cd19545">
    <property type="entry name" value="FUM14_C_NRPS-like"/>
    <property type="match status" value="1"/>
</dbReference>
<dbReference type="FunFam" id="3.30.559.10:FF:000048">
    <property type="entry name" value="Nonribosomal peptide synthase inpB"/>
    <property type="match status" value="1"/>
</dbReference>
<dbReference type="FunFam" id="3.30.559.10:FF:000016">
    <property type="entry name" value="Nonribosomal peptide synthase Pes1"/>
    <property type="match status" value="1"/>
</dbReference>
<dbReference type="FunFam" id="3.30.559.30:FF:000002">
    <property type="entry name" value="Nonribosomal peptide synthase Pes1"/>
    <property type="match status" value="1"/>
</dbReference>
<dbReference type="FunFam" id="3.30.300.30:FF:000015">
    <property type="entry name" value="Nonribosomal peptide synthase SidD"/>
    <property type="match status" value="3"/>
</dbReference>
<dbReference type="FunFam" id="3.30.559.30:FF:000003">
    <property type="entry name" value="Nonribosomal peptide synthase SidD"/>
    <property type="match status" value="1"/>
</dbReference>
<dbReference type="FunFam" id="3.40.50.12780:FF:000014">
    <property type="entry name" value="Nonribosomal peptide synthetase 1"/>
    <property type="match status" value="2"/>
</dbReference>
<dbReference type="FunFam" id="1.10.1200.10:FF:000046">
    <property type="entry name" value="Nonribosomal peptide synthetase easA"/>
    <property type="match status" value="1"/>
</dbReference>
<dbReference type="FunFam" id="1.10.1200.10:FF:000067">
    <property type="entry name" value="Nonribosomal peptide synthetase easA"/>
    <property type="match status" value="1"/>
</dbReference>
<dbReference type="Gene3D" id="3.30.300.30">
    <property type="match status" value="3"/>
</dbReference>
<dbReference type="Gene3D" id="1.10.1200.10">
    <property type="entry name" value="ACP-like"/>
    <property type="match status" value="3"/>
</dbReference>
<dbReference type="Gene3D" id="3.30.559.10">
    <property type="entry name" value="Chloramphenicol acetyltransferase-like domain"/>
    <property type="match status" value="4"/>
</dbReference>
<dbReference type="Gene3D" id="3.40.50.12780">
    <property type="entry name" value="N-terminal domain of ligase-like"/>
    <property type="match status" value="3"/>
</dbReference>
<dbReference type="Gene3D" id="3.30.559.30">
    <property type="entry name" value="Nonribosomal peptide synthetase, condensation domain"/>
    <property type="match status" value="4"/>
</dbReference>
<dbReference type="InterPro" id="IPR010071">
    <property type="entry name" value="AA_adenyl_dom"/>
</dbReference>
<dbReference type="InterPro" id="IPR036736">
    <property type="entry name" value="ACP-like_sf"/>
</dbReference>
<dbReference type="InterPro" id="IPR045851">
    <property type="entry name" value="AMP-bd_C_sf"/>
</dbReference>
<dbReference type="InterPro" id="IPR020845">
    <property type="entry name" value="AMP-binding_CS"/>
</dbReference>
<dbReference type="InterPro" id="IPR000873">
    <property type="entry name" value="AMP-dep_synth/lig_dom"/>
</dbReference>
<dbReference type="InterPro" id="IPR042099">
    <property type="entry name" value="ANL_N_sf"/>
</dbReference>
<dbReference type="InterPro" id="IPR023213">
    <property type="entry name" value="CAT-like_dom_sf"/>
</dbReference>
<dbReference type="InterPro" id="IPR001242">
    <property type="entry name" value="Condensatn"/>
</dbReference>
<dbReference type="InterPro" id="IPR020806">
    <property type="entry name" value="PKS_PP-bd"/>
</dbReference>
<dbReference type="InterPro" id="IPR009081">
    <property type="entry name" value="PP-bd_ACP"/>
</dbReference>
<dbReference type="InterPro" id="IPR006162">
    <property type="entry name" value="Ppantetheine_attach_site"/>
</dbReference>
<dbReference type="NCBIfam" id="TIGR01733">
    <property type="entry name" value="AA-adenyl-dom"/>
    <property type="match status" value="3"/>
</dbReference>
<dbReference type="NCBIfam" id="NF003417">
    <property type="entry name" value="PRK04813.1"/>
    <property type="match status" value="3"/>
</dbReference>
<dbReference type="PANTHER" id="PTHR45527:SF1">
    <property type="entry name" value="FATTY ACID SYNTHASE"/>
    <property type="match status" value="1"/>
</dbReference>
<dbReference type="PANTHER" id="PTHR45527">
    <property type="entry name" value="NONRIBOSOMAL PEPTIDE SYNTHETASE"/>
    <property type="match status" value="1"/>
</dbReference>
<dbReference type="Pfam" id="PF00501">
    <property type="entry name" value="AMP-binding"/>
    <property type="match status" value="3"/>
</dbReference>
<dbReference type="Pfam" id="PF00668">
    <property type="entry name" value="Condensation"/>
    <property type="match status" value="4"/>
</dbReference>
<dbReference type="Pfam" id="PF00550">
    <property type="entry name" value="PP-binding"/>
    <property type="match status" value="3"/>
</dbReference>
<dbReference type="SMART" id="SM00823">
    <property type="entry name" value="PKS_PP"/>
    <property type="match status" value="3"/>
</dbReference>
<dbReference type="SUPFAM" id="SSF56801">
    <property type="entry name" value="Acetyl-CoA synthetase-like"/>
    <property type="match status" value="3"/>
</dbReference>
<dbReference type="SUPFAM" id="SSF47336">
    <property type="entry name" value="ACP-like"/>
    <property type="match status" value="3"/>
</dbReference>
<dbReference type="SUPFAM" id="SSF52777">
    <property type="entry name" value="CoA-dependent acyltransferases"/>
    <property type="match status" value="8"/>
</dbReference>
<dbReference type="PROSITE" id="PS00455">
    <property type="entry name" value="AMP_BINDING"/>
    <property type="match status" value="2"/>
</dbReference>
<dbReference type="PROSITE" id="PS50075">
    <property type="entry name" value="CARRIER"/>
    <property type="match status" value="3"/>
</dbReference>
<dbReference type="PROSITE" id="PS00012">
    <property type="entry name" value="PHOSPHOPANTETHEINE"/>
    <property type="match status" value="2"/>
</dbReference>